<sequence length="566" mass="63929">MQPIISFEQFTFQYGHAAQPTLSDITFHIYPGEKVLIAGRSGSGKSTLAHCINGLIPFSYEGNSTGNVLIAGKDPREGSIFEQSKQVGTILQDQDAQFIGLTVEEDVAFYLENECVKQDNMKKIVSDSLRKVKMHTFHKQSPHELSGGQKQTVSLAGLLTTNADILLFDEPLANLDPLSAIHTIELMKDIHEQYNKTIVIIEHRIEEIFKLDLDKVILIDEGKVIAMGTPKEILASNILPRIGLREPIYIEALKRLHFDSNNDVIYPMENLQKEKVSNVIKEWMEKQVILKRNAKNKELLKVENLSFSYPNKQKVLENVNLLIYEGEIVALLGHNGAGKSTLAHSLIGINKMKNGKIALKGEDISSWSIRKRGEIISYVMQNPNHMITQPTVFEEVSFTLTLHNFSKEEIKNKVEGILKICGLYPFRNWPIQALSYGQKKRLTIASVLTTNPKLIILDEPTAGQDYYHYKQFMSFIKNLAKKGISFVVITHDMNLALEYTDRAVVLHEGKIIADNTVFDVLGNQETLQRANLRESSLTKLIKFSGIACPEKFMELYLDSTRREEGA</sequence>
<organism>
    <name type="scientific">Bacillus cereus (strain ATCC 14579 / DSM 31 / CCUG 7414 / JCM 2152 / NBRC 15305 / NCIMB 9373 / NCTC 2599 / NRRL B-3711)</name>
    <dbReference type="NCBI Taxonomy" id="226900"/>
    <lineage>
        <taxon>Bacteria</taxon>
        <taxon>Bacillati</taxon>
        <taxon>Bacillota</taxon>
        <taxon>Bacilli</taxon>
        <taxon>Bacillales</taxon>
        <taxon>Bacillaceae</taxon>
        <taxon>Bacillus</taxon>
        <taxon>Bacillus cereus group</taxon>
    </lineage>
</organism>
<keyword id="KW-0067">ATP-binding</keyword>
<keyword id="KW-1003">Cell membrane</keyword>
<keyword id="KW-0472">Membrane</keyword>
<keyword id="KW-0547">Nucleotide-binding</keyword>
<keyword id="KW-1185">Reference proteome</keyword>
<keyword id="KW-0677">Repeat</keyword>
<keyword id="KW-1278">Translocase</keyword>
<keyword id="KW-0813">Transport</keyword>
<dbReference type="EC" id="7.-.-.-"/>
<dbReference type="EMBL" id="AE016877">
    <property type="protein sequence ID" value="AAP09613.1"/>
    <property type="status" value="ALT_INIT"/>
    <property type="molecule type" value="Genomic_DNA"/>
</dbReference>
<dbReference type="RefSeq" id="NP_832412.1">
    <property type="nucleotide sequence ID" value="NC_004722.1"/>
</dbReference>
<dbReference type="RefSeq" id="WP_001182509.1">
    <property type="nucleotide sequence ID" value="NC_004722.1"/>
</dbReference>
<dbReference type="SMR" id="Q81CT8"/>
<dbReference type="STRING" id="226900.BC_2655"/>
<dbReference type="KEGG" id="bce:BC2655"/>
<dbReference type="PATRIC" id="fig|226900.8.peg.2702"/>
<dbReference type="HOGENOM" id="CLU_000604_86_7_9"/>
<dbReference type="OrthoDB" id="501320at2"/>
<dbReference type="Proteomes" id="UP000001417">
    <property type="component" value="Chromosome"/>
</dbReference>
<dbReference type="GO" id="GO:0043190">
    <property type="term" value="C:ATP-binding cassette (ABC) transporter complex"/>
    <property type="evidence" value="ECO:0000318"/>
    <property type="project" value="GO_Central"/>
</dbReference>
<dbReference type="GO" id="GO:0005524">
    <property type="term" value="F:ATP binding"/>
    <property type="evidence" value="ECO:0000318"/>
    <property type="project" value="GO_Central"/>
</dbReference>
<dbReference type="GO" id="GO:0016887">
    <property type="term" value="F:ATP hydrolysis activity"/>
    <property type="evidence" value="ECO:0007669"/>
    <property type="project" value="InterPro"/>
</dbReference>
<dbReference type="GO" id="GO:0042626">
    <property type="term" value="F:ATPase-coupled transmembrane transporter activity"/>
    <property type="evidence" value="ECO:0000318"/>
    <property type="project" value="GO_Central"/>
</dbReference>
<dbReference type="CDD" id="cd03225">
    <property type="entry name" value="ABC_cobalt_CbiO_domain1"/>
    <property type="match status" value="2"/>
</dbReference>
<dbReference type="FunFam" id="3.40.50.300:FF:001422">
    <property type="entry name" value="Cobalt ABC transporter ATP-binding protein"/>
    <property type="match status" value="1"/>
</dbReference>
<dbReference type="FunFam" id="3.40.50.300:FF:000224">
    <property type="entry name" value="Energy-coupling factor transporter ATP-binding protein EcfA"/>
    <property type="match status" value="1"/>
</dbReference>
<dbReference type="Gene3D" id="3.40.50.300">
    <property type="entry name" value="P-loop containing nucleotide triphosphate hydrolases"/>
    <property type="match status" value="2"/>
</dbReference>
<dbReference type="InterPro" id="IPR003593">
    <property type="entry name" value="AAA+_ATPase"/>
</dbReference>
<dbReference type="InterPro" id="IPR022216">
    <property type="entry name" value="ABC_Co_transporter"/>
</dbReference>
<dbReference type="InterPro" id="IPR003439">
    <property type="entry name" value="ABC_transporter-like_ATP-bd"/>
</dbReference>
<dbReference type="InterPro" id="IPR017871">
    <property type="entry name" value="ABC_transporter-like_CS"/>
</dbReference>
<dbReference type="InterPro" id="IPR015856">
    <property type="entry name" value="ABC_transpr_CbiO/EcfA_su"/>
</dbReference>
<dbReference type="InterPro" id="IPR050095">
    <property type="entry name" value="ECF_ABC_transporter_ATP-bd"/>
</dbReference>
<dbReference type="InterPro" id="IPR027417">
    <property type="entry name" value="P-loop_NTPase"/>
</dbReference>
<dbReference type="NCBIfam" id="NF010167">
    <property type="entry name" value="PRK13648.1"/>
    <property type="match status" value="2"/>
</dbReference>
<dbReference type="PANTHER" id="PTHR43553:SF26">
    <property type="entry name" value="ABC TRANSPORTER ATP-BINDING PROTEIN BC_2655-RELATED"/>
    <property type="match status" value="1"/>
</dbReference>
<dbReference type="PANTHER" id="PTHR43553">
    <property type="entry name" value="HEAVY METAL TRANSPORTER"/>
    <property type="match status" value="1"/>
</dbReference>
<dbReference type="Pfam" id="PF00005">
    <property type="entry name" value="ABC_tran"/>
    <property type="match status" value="2"/>
</dbReference>
<dbReference type="Pfam" id="PF12558">
    <property type="entry name" value="DUF3744"/>
    <property type="match status" value="1"/>
</dbReference>
<dbReference type="SMART" id="SM00382">
    <property type="entry name" value="AAA"/>
    <property type="match status" value="2"/>
</dbReference>
<dbReference type="SUPFAM" id="SSF52540">
    <property type="entry name" value="P-loop containing nucleoside triphosphate hydrolases"/>
    <property type="match status" value="2"/>
</dbReference>
<dbReference type="PROSITE" id="PS00211">
    <property type="entry name" value="ABC_TRANSPORTER_1"/>
    <property type="match status" value="1"/>
</dbReference>
<dbReference type="PROSITE" id="PS50893">
    <property type="entry name" value="ABC_TRANSPORTER_2"/>
    <property type="match status" value="2"/>
</dbReference>
<reference key="1">
    <citation type="journal article" date="2003" name="Nature">
        <title>Genome sequence of Bacillus cereus and comparative analysis with Bacillus anthracis.</title>
        <authorList>
            <person name="Ivanova N."/>
            <person name="Sorokin A."/>
            <person name="Anderson I."/>
            <person name="Galleron N."/>
            <person name="Candelon B."/>
            <person name="Kapatral V."/>
            <person name="Bhattacharyya A."/>
            <person name="Reznik G."/>
            <person name="Mikhailova N."/>
            <person name="Lapidus A."/>
            <person name="Chu L."/>
            <person name="Mazur M."/>
            <person name="Goltsman E."/>
            <person name="Larsen N."/>
            <person name="D'Souza M."/>
            <person name="Walunas T."/>
            <person name="Grechkin Y."/>
            <person name="Pusch G."/>
            <person name="Haselkorn R."/>
            <person name="Fonstein M."/>
            <person name="Ehrlich S.D."/>
            <person name="Overbeek R."/>
            <person name="Kyrpides N.C."/>
        </authorList>
    </citation>
    <scope>NUCLEOTIDE SEQUENCE [LARGE SCALE GENOMIC DNA]</scope>
    <source>
        <strain>ATCC 14579 / DSM 31 / CCUG 7414 / JCM 2152 / NBRC 15305 / NCIMB 9373 / NCTC 2599 / NRRL B-3711</strain>
    </source>
</reference>
<name>Y2655_BACCR</name>
<comment type="function">
    <text evidence="1">Probably part of an ABC transporter complex. Responsible for energy coupling to the transport system (By similarity).</text>
</comment>
<comment type="subcellular location">
    <subcellularLocation>
        <location evidence="1">Cell membrane</location>
        <topology evidence="1">Peripheral membrane protein</topology>
    </subcellularLocation>
</comment>
<comment type="similarity">
    <text evidence="3">Belongs to the ABC transporter superfamily.</text>
</comment>
<comment type="sequence caution" evidence="3">
    <conflict type="erroneous initiation">
        <sequence resource="EMBL-CDS" id="AAP09613"/>
    </conflict>
</comment>
<feature type="chain" id="PRO_0000091979" description="Putative ABC transporter ATP-binding protein BC_2655">
    <location>
        <begin position="1"/>
        <end position="566"/>
    </location>
</feature>
<feature type="domain" description="ABC transporter 1" evidence="2">
    <location>
        <begin position="5"/>
        <end position="246"/>
    </location>
</feature>
<feature type="domain" description="ABC transporter 2" evidence="2">
    <location>
        <begin position="300"/>
        <end position="533"/>
    </location>
</feature>
<feature type="binding site" evidence="2">
    <location>
        <begin position="39"/>
        <end position="46"/>
    </location>
    <ligand>
        <name>ATP</name>
        <dbReference type="ChEBI" id="CHEBI:30616"/>
        <label>1</label>
    </ligand>
</feature>
<feature type="binding site" evidence="2">
    <location>
        <begin position="333"/>
        <end position="340"/>
    </location>
    <ligand>
        <name>ATP</name>
        <dbReference type="ChEBI" id="CHEBI:30616"/>
        <label>2</label>
    </ligand>
</feature>
<evidence type="ECO:0000250" key="1"/>
<evidence type="ECO:0000255" key="2">
    <source>
        <dbReference type="PROSITE-ProRule" id="PRU00434"/>
    </source>
</evidence>
<evidence type="ECO:0000305" key="3"/>
<accession>Q81CT8</accession>
<gene>
    <name type="ordered locus">BC_2655</name>
</gene>
<proteinExistence type="inferred from homology"/>
<protein>
    <recommendedName>
        <fullName>Putative ABC transporter ATP-binding protein BC_2655</fullName>
        <ecNumber>7.-.-.-</ecNumber>
    </recommendedName>
</protein>